<comment type="function">
    <text evidence="1">Acts on oxaloacetate, sulfopyruvate but not on pyruvate. Has a higher selectivity for the coenzyme NADH than for NADPH.</text>
</comment>
<comment type="catalytic activity">
    <reaction>
        <text>(S)-malate + NAD(+) = oxaloacetate + NADH + H(+)</text>
        <dbReference type="Rhea" id="RHEA:21432"/>
        <dbReference type="ChEBI" id="CHEBI:15378"/>
        <dbReference type="ChEBI" id="CHEBI:15589"/>
        <dbReference type="ChEBI" id="CHEBI:16452"/>
        <dbReference type="ChEBI" id="CHEBI:57540"/>
        <dbReference type="ChEBI" id="CHEBI:57945"/>
        <dbReference type="EC" id="1.1.1.37"/>
    </reaction>
</comment>
<comment type="catalytic activity">
    <reaction>
        <text>(S)-malate + NADP(+) = oxaloacetate + NADPH + H(+)</text>
        <dbReference type="Rhea" id="RHEA:10824"/>
        <dbReference type="ChEBI" id="CHEBI:15378"/>
        <dbReference type="ChEBI" id="CHEBI:15589"/>
        <dbReference type="ChEBI" id="CHEBI:16452"/>
        <dbReference type="ChEBI" id="CHEBI:57783"/>
        <dbReference type="ChEBI" id="CHEBI:58349"/>
        <dbReference type="EC" id="1.1.1.82"/>
    </reaction>
</comment>
<comment type="catalytic activity">
    <reaction>
        <text>(2S)-3-sulfolactate + NAD(+) = 3-sulfopyruvate + NADH + H(+)</text>
        <dbReference type="Rhea" id="RHEA:28194"/>
        <dbReference type="ChEBI" id="CHEBI:15378"/>
        <dbReference type="ChEBI" id="CHEBI:57540"/>
        <dbReference type="ChEBI" id="CHEBI:57940"/>
        <dbReference type="ChEBI" id="CHEBI:57945"/>
        <dbReference type="ChEBI" id="CHEBI:61289"/>
        <dbReference type="EC" id="1.1.1.310"/>
    </reaction>
</comment>
<comment type="subunit">
    <text>Homodimer.</text>
</comment>
<comment type="subcellular location">
    <subcellularLocation>
        <location>Cytoplasm</location>
    </subcellularLocation>
</comment>
<comment type="similarity">
    <text evidence="2">Belongs to the LDH2/MDH2 oxidoreductase family.</text>
</comment>
<feature type="chain" id="PRO_0000083827" description="Malate/(S)-sulfolactate dehydrogenase">
    <location>
        <begin position="1"/>
        <end position="339"/>
    </location>
</feature>
<accession>P16142</accession>
<accession>E3GY09</accession>
<reference key="1">
    <citation type="journal article" date="1990" name="Eur. J. Biochem.">
        <title>Properties and primary structure of the L-malate dehydrogenase from the extremely thermophilic archaebacterium Methanothermus fervidus.</title>
        <authorList>
            <person name="Honka E."/>
            <person name="Fabry S."/>
            <person name="Niermann T."/>
            <person name="Palm P."/>
            <person name="Hensel R."/>
        </authorList>
    </citation>
    <scope>NUCLEOTIDE SEQUENCE [GENOMIC DNA]</scope>
    <scope>PROTEIN SEQUENCE OF 1-24</scope>
    <source>
        <strain>ATCC 43054 / DSM 2088 / JCM 10308 / V24 S</strain>
    </source>
</reference>
<reference key="2">
    <citation type="journal article" date="2010" name="Stand. Genomic Sci.">
        <title>Complete genome sequence of Methanothermus fervidus type strain (V24S).</title>
        <authorList>
            <person name="Anderson I."/>
            <person name="Djao O.D."/>
            <person name="Misra M."/>
            <person name="Chertkov O."/>
            <person name="Nolan M."/>
            <person name="Lucas S."/>
            <person name="Lapidus A."/>
            <person name="Del Rio T.G."/>
            <person name="Tice H."/>
            <person name="Cheng J.F."/>
            <person name="Tapia R."/>
            <person name="Han C."/>
            <person name="Goodwin L."/>
            <person name="Pitluck S."/>
            <person name="Liolios K."/>
            <person name="Ivanova N."/>
            <person name="Mavromatis K."/>
            <person name="Mikhailova N."/>
            <person name="Pati A."/>
            <person name="Brambilla E."/>
            <person name="Chen A."/>
            <person name="Palaniappan K."/>
            <person name="Land M."/>
            <person name="Hauser L."/>
            <person name="Chang Y.J."/>
            <person name="Jeffries C.D."/>
            <person name="Sikorski J."/>
            <person name="Spring S."/>
            <person name="Rohde M."/>
            <person name="Eichinger K."/>
            <person name="Huber H."/>
            <person name="Wirth R."/>
            <person name="Goker M."/>
            <person name="Detter J.C."/>
            <person name="Woyke T."/>
            <person name="Bristow J."/>
            <person name="Eisen J.A."/>
            <person name="Markowitz V."/>
            <person name="Hugenholtz P."/>
            <person name="Klenk H.P."/>
            <person name="Kyrpides N.C."/>
        </authorList>
    </citation>
    <scope>NUCLEOTIDE SEQUENCE [LARGE SCALE GENOMIC DNA]</scope>
    <source>
        <strain>ATCC 43054 / DSM 2088 / JCM 10308 / V24 S</strain>
    </source>
</reference>
<reference key="3">
    <citation type="journal article" date="2000" name="J. Bacteriol.">
        <title>Identification of an archaeal 2-hydroxy acid dehydrogenase catalyzing reactions involved in coenzyme biosynthesis in methanoarchaea.</title>
        <authorList>
            <person name="Graupner M."/>
            <person name="Xu H."/>
            <person name="White R.H."/>
        </authorList>
    </citation>
    <scope>FUNCTION</scope>
</reference>
<sequence>MIISPEEERSLIIKILNALGVSEEHAKITADVIVDADLKGFTSHGIGRFPQYVEGIKLGTIKTSGNIEIEKETDSVALINGNHLLGQVVAYKGMKLAIEKAKNTGVGIVGIHDSNHFGIAGYYSDMAMKNDMIGITMTNTEPAVAPLGGKIPVLGTNPIAISIPSNEYYVAVDMSTAAVARGKLLEAARKNEKIPEGIAVDKNGNPTTDPNEALNGSILPFGGHKGYALCFMIEILAGPLVKAEFGSKVKGTVDPSQMCTKGDLLIAIDPSKFYDIEEFKRNVDEFVKEIKSTGKDVLIPGDRERMNIKKREKEGIELDKKLVEKLKEIADELNIELTW</sequence>
<evidence type="ECO:0000269" key="1">
    <source>
    </source>
</evidence>
<evidence type="ECO:0000305" key="2"/>
<organism>
    <name type="scientific">Methanothermus fervidus (strain ATCC 43054 / DSM 2088 / JCM 10308 / V24 S)</name>
    <dbReference type="NCBI Taxonomy" id="523846"/>
    <lineage>
        <taxon>Archaea</taxon>
        <taxon>Methanobacteriati</taxon>
        <taxon>Methanobacteriota</taxon>
        <taxon>Methanomada group</taxon>
        <taxon>Methanobacteria</taxon>
        <taxon>Methanobacteriales</taxon>
        <taxon>Methanothermaceae</taxon>
        <taxon>Methanothermus</taxon>
    </lineage>
</organism>
<name>MDH_METFV</name>
<protein>
    <recommendedName>
        <fullName>Malate/(S)-sulfolactate dehydrogenase</fullName>
        <ecNumber>1.1.1.310</ecNumber>
        <ecNumber>1.1.1.37</ecNumber>
        <ecNumber>1.1.1.82</ecNumber>
    </recommendedName>
</protein>
<dbReference type="EC" id="1.1.1.310"/>
<dbReference type="EC" id="1.1.1.37"/>
<dbReference type="EC" id="1.1.1.82"/>
<dbReference type="EMBL" id="X51714">
    <property type="protein sequence ID" value="CAA36010.1"/>
    <property type="molecule type" value="Genomic_DNA"/>
</dbReference>
<dbReference type="EMBL" id="X51840">
    <property type="protein sequence ID" value="CAA36133.1"/>
    <property type="molecule type" value="Genomic_DNA"/>
</dbReference>
<dbReference type="EMBL" id="CP002278">
    <property type="protein sequence ID" value="ADP77191.1"/>
    <property type="molecule type" value="Genomic_DNA"/>
</dbReference>
<dbReference type="PIR" id="S08981">
    <property type="entry name" value="S08981"/>
</dbReference>
<dbReference type="RefSeq" id="WP_013413469.1">
    <property type="nucleotide sequence ID" value="NC_014658.1"/>
</dbReference>
<dbReference type="SMR" id="P16142"/>
<dbReference type="STRING" id="523846.Mfer_0389"/>
<dbReference type="GeneID" id="9962106"/>
<dbReference type="KEGG" id="mfv:Mfer_0389"/>
<dbReference type="HOGENOM" id="CLU_040452_3_1_2"/>
<dbReference type="OrthoDB" id="40552at2157"/>
<dbReference type="BRENDA" id="1.1.1.337">
    <property type="organism ID" value="3286"/>
</dbReference>
<dbReference type="SABIO-RK" id="P16142"/>
<dbReference type="Proteomes" id="UP000002315">
    <property type="component" value="Chromosome"/>
</dbReference>
<dbReference type="GO" id="GO:0005737">
    <property type="term" value="C:cytoplasm"/>
    <property type="evidence" value="ECO:0007669"/>
    <property type="project" value="UniProtKB-SubCell"/>
</dbReference>
<dbReference type="GO" id="GO:0030060">
    <property type="term" value="F:L-malate dehydrogenase (NAD+) activity"/>
    <property type="evidence" value="ECO:0007669"/>
    <property type="project" value="UniProtKB-EC"/>
</dbReference>
<dbReference type="GO" id="GO:0046554">
    <property type="term" value="F:L-malate dehydrogenase (NADP+) activity"/>
    <property type="evidence" value="ECO:0007669"/>
    <property type="project" value="UniProtKB-EC"/>
</dbReference>
<dbReference type="GO" id="GO:0102155">
    <property type="term" value="F:S-sulfolactate dehydrogenase activity"/>
    <property type="evidence" value="ECO:0007669"/>
    <property type="project" value="UniProtKB-EC"/>
</dbReference>
<dbReference type="GO" id="GO:0006099">
    <property type="term" value="P:tricarboxylic acid cycle"/>
    <property type="evidence" value="ECO:0007669"/>
    <property type="project" value="UniProtKB-KW"/>
</dbReference>
<dbReference type="Gene3D" id="1.10.1530.10">
    <property type="match status" value="1"/>
</dbReference>
<dbReference type="Gene3D" id="3.30.1370.60">
    <property type="entry name" value="Hypothetical oxidoreductase yiak, domain 2"/>
    <property type="match status" value="1"/>
</dbReference>
<dbReference type="InterPro" id="IPR053453">
    <property type="entry name" value="LDH2/MDH2_Oxidoreductase"/>
</dbReference>
<dbReference type="InterPro" id="IPR043144">
    <property type="entry name" value="Mal/L-sulf/L-lact_DH-like_ah"/>
</dbReference>
<dbReference type="InterPro" id="IPR043143">
    <property type="entry name" value="Mal/L-sulf/L-lact_DH-like_NADP"/>
</dbReference>
<dbReference type="InterPro" id="IPR036111">
    <property type="entry name" value="Mal/L-sulfo/L-lacto_DH-like_sf"/>
</dbReference>
<dbReference type="InterPro" id="IPR003767">
    <property type="entry name" value="Malate/L-lactate_DH-like"/>
</dbReference>
<dbReference type="NCBIfam" id="NF040650">
    <property type="entry name" value="sulfolac_dhydr"/>
    <property type="match status" value="1"/>
</dbReference>
<dbReference type="PANTHER" id="PTHR11091:SF0">
    <property type="entry name" value="MALATE DEHYDROGENASE"/>
    <property type="match status" value="1"/>
</dbReference>
<dbReference type="PANTHER" id="PTHR11091">
    <property type="entry name" value="OXIDOREDUCTASE-RELATED"/>
    <property type="match status" value="1"/>
</dbReference>
<dbReference type="Pfam" id="PF02615">
    <property type="entry name" value="Ldh_2"/>
    <property type="match status" value="1"/>
</dbReference>
<dbReference type="SUPFAM" id="SSF89733">
    <property type="entry name" value="L-sulfolactate dehydrogenase-like"/>
    <property type="match status" value="1"/>
</dbReference>
<gene>
    <name type="primary">mdh</name>
    <name type="ordered locus">Mfer_0389</name>
</gene>
<proteinExistence type="evidence at protein level"/>
<keyword id="KW-0963">Cytoplasm</keyword>
<keyword id="KW-0903">Direct protein sequencing</keyword>
<keyword id="KW-0520">NAD</keyword>
<keyword id="KW-0521">NADP</keyword>
<keyword id="KW-0560">Oxidoreductase</keyword>
<keyword id="KW-1185">Reference proteome</keyword>
<keyword id="KW-0816">Tricarboxylic acid cycle</keyword>